<name>GRC3_ASPCL</name>
<keyword id="KW-0067">ATP-binding</keyword>
<keyword id="KW-0418">Kinase</keyword>
<keyword id="KW-0547">Nucleotide-binding</keyword>
<keyword id="KW-0539">Nucleus</keyword>
<keyword id="KW-1185">Reference proteome</keyword>
<keyword id="KW-0698">rRNA processing</keyword>
<keyword id="KW-0808">Transferase</keyword>
<protein>
    <recommendedName>
        <fullName>Polynucleotide 5'-hydroxyl-kinase grc3</fullName>
        <ecNumber>2.7.1.-</ecNumber>
    </recommendedName>
</protein>
<comment type="function">
    <text evidence="1">Polynucleotide 5'-kinase involved in rRNA processing.</text>
</comment>
<comment type="subcellular location">
    <subcellularLocation>
        <location evidence="1">Nucleus</location>
        <location evidence="1">Nucleolus</location>
    </subcellularLocation>
</comment>
<comment type="similarity">
    <text evidence="4">Belongs to the Clp1 family. NOL9/GRC3 subfamily.</text>
</comment>
<feature type="chain" id="PRO_0000289951" description="Polynucleotide 5'-hydroxyl-kinase grc3">
    <location>
        <begin position="1"/>
        <end position="839"/>
    </location>
</feature>
<feature type="region of interest" description="Disordered" evidence="3">
    <location>
        <begin position="1"/>
        <end position="131"/>
    </location>
</feature>
<feature type="region of interest" description="Disordered" evidence="3">
    <location>
        <begin position="605"/>
        <end position="658"/>
    </location>
</feature>
<feature type="region of interest" description="Disordered" evidence="3">
    <location>
        <begin position="758"/>
        <end position="784"/>
    </location>
</feature>
<feature type="region of interest" description="Disordered" evidence="3">
    <location>
        <begin position="807"/>
        <end position="839"/>
    </location>
</feature>
<feature type="compositionally biased region" description="Low complexity" evidence="3">
    <location>
        <begin position="10"/>
        <end position="28"/>
    </location>
</feature>
<feature type="compositionally biased region" description="Basic and acidic residues" evidence="3">
    <location>
        <begin position="76"/>
        <end position="90"/>
    </location>
</feature>
<feature type="compositionally biased region" description="Acidic residues" evidence="3">
    <location>
        <begin position="120"/>
        <end position="131"/>
    </location>
</feature>
<feature type="compositionally biased region" description="Polar residues" evidence="3">
    <location>
        <begin position="644"/>
        <end position="658"/>
    </location>
</feature>
<feature type="binding site" evidence="2">
    <location>
        <begin position="333"/>
        <end position="340"/>
    </location>
    <ligand>
        <name>ATP</name>
        <dbReference type="ChEBI" id="CHEBI:30616"/>
    </ligand>
</feature>
<dbReference type="EC" id="2.7.1.-"/>
<dbReference type="EMBL" id="DS027052">
    <property type="protein sequence ID" value="EAW11564.1"/>
    <property type="molecule type" value="Genomic_DNA"/>
</dbReference>
<dbReference type="RefSeq" id="XP_001272990.1">
    <property type="nucleotide sequence ID" value="XM_001272989.1"/>
</dbReference>
<dbReference type="SMR" id="A1CFB5"/>
<dbReference type="STRING" id="344612.A1CFB5"/>
<dbReference type="EnsemblFungi" id="EAW11564">
    <property type="protein sequence ID" value="EAW11564"/>
    <property type="gene ID" value="ACLA_092620"/>
</dbReference>
<dbReference type="GeneID" id="4705247"/>
<dbReference type="KEGG" id="act:ACLA_092620"/>
<dbReference type="VEuPathDB" id="FungiDB:ACLA_092620"/>
<dbReference type="eggNOG" id="KOG2750">
    <property type="taxonomic scope" value="Eukaryota"/>
</dbReference>
<dbReference type="HOGENOM" id="CLU_010345_1_2_1"/>
<dbReference type="OMA" id="PEFAPMG"/>
<dbReference type="OrthoDB" id="4054781at2759"/>
<dbReference type="Proteomes" id="UP000006701">
    <property type="component" value="Unassembled WGS sequence"/>
</dbReference>
<dbReference type="GO" id="GO:0005730">
    <property type="term" value="C:nucleolus"/>
    <property type="evidence" value="ECO:0007669"/>
    <property type="project" value="UniProtKB-SubCell"/>
</dbReference>
<dbReference type="GO" id="GO:0005524">
    <property type="term" value="F:ATP binding"/>
    <property type="evidence" value="ECO:0007669"/>
    <property type="project" value="UniProtKB-KW"/>
</dbReference>
<dbReference type="GO" id="GO:0051731">
    <property type="term" value="F:polynucleotide 5'-hydroxyl-kinase activity"/>
    <property type="evidence" value="ECO:0000250"/>
    <property type="project" value="UniProtKB"/>
</dbReference>
<dbReference type="GO" id="GO:0000448">
    <property type="term" value="P:cleavage in ITS2 between 5.8S rRNA and LSU-rRNA of tricistronic rRNA transcript (SSU-rRNA, 5.8S rRNA, LSU-rRNA)"/>
    <property type="evidence" value="ECO:0007669"/>
    <property type="project" value="TreeGrafter"/>
</dbReference>
<dbReference type="GO" id="GO:0006364">
    <property type="term" value="P:rRNA processing"/>
    <property type="evidence" value="ECO:0000250"/>
    <property type="project" value="UniProtKB"/>
</dbReference>
<dbReference type="FunFam" id="3.40.50.300:FF:001156">
    <property type="entry name" value="Polynucleotide 5-hydroxyl-kinase grc3"/>
    <property type="match status" value="1"/>
</dbReference>
<dbReference type="Gene3D" id="3.40.50.300">
    <property type="entry name" value="P-loop containing nucleotide triphosphate hydrolases"/>
    <property type="match status" value="1"/>
</dbReference>
<dbReference type="InterPro" id="IPR045116">
    <property type="entry name" value="Clp1/Grc3"/>
</dbReference>
<dbReference type="InterPro" id="IPR032319">
    <property type="entry name" value="CLP1_P"/>
</dbReference>
<dbReference type="InterPro" id="IPR027417">
    <property type="entry name" value="P-loop_NTPase"/>
</dbReference>
<dbReference type="PANTHER" id="PTHR12755">
    <property type="entry name" value="CLEAVAGE/POLYADENYLATION FACTOR IA SUBUNIT CLP1P"/>
    <property type="match status" value="1"/>
</dbReference>
<dbReference type="PANTHER" id="PTHR12755:SF3">
    <property type="entry name" value="POLYNUCLEOTIDE 5'-HYDROXYL-KINASE NOL9"/>
    <property type="match status" value="1"/>
</dbReference>
<dbReference type="Pfam" id="PF16575">
    <property type="entry name" value="CLP1_P"/>
    <property type="match status" value="1"/>
</dbReference>
<dbReference type="SUPFAM" id="SSF52540">
    <property type="entry name" value="P-loop containing nucleoside triphosphate hydrolases"/>
    <property type="match status" value="1"/>
</dbReference>
<proteinExistence type="inferred from homology"/>
<accession>A1CFB5</accession>
<evidence type="ECO:0000250" key="1"/>
<evidence type="ECO:0000255" key="2"/>
<evidence type="ECO:0000256" key="3">
    <source>
        <dbReference type="SAM" id="MobiDB-lite"/>
    </source>
</evidence>
<evidence type="ECO:0000305" key="4"/>
<sequence length="839" mass="91913">MKRKAEKQQAAAPVSAFAARKARQQQAQVVPSEKPATNELSTEPPSKKPRRSLEEGAANLTANGEDHVQTRRSSRRKQESLRSGVSDEKQHKKAALNVRTRSAAQPPAQKDEEKDLSGALEEEDDEEVLEEENDAGAIALDGDADGYESPVDVAHLQNFPLSKTRLNKNSVIYSDEQTLCVRIKEKMNLVLLGHYDLWVKRGVVSLMGAKLHPSARVYRVYAPSTHSLPVIKCIAGVDGEAEIEVKSCHSGIYRLRHLSPLYQRIWNGKNTSADRLTLKKAPASAKRTFSVLYTSSDDSLNRHLRPLHLEKQWSSAIKSLSQRNGQLRVLICGPKASGKSTFSRYLLNHLLSPAPQTETDFRNTDGVAFLDLDPGQPEFSPMGQVYLAHLGSPFFGPPFTHPSLDGGQDGSIIRAHHIGATSPKDDPDHYVLAAMDLMDRYRSLLASYPQCPLIINYPGWIFGLGLEVATWLVKSLGLSDVVYMSEKGPAEVVEPLSQAAYEARIPLTTLPSQPTDFVSRSSAQLRSMQIQSYFHMSQPSEIQTPQWLETTISKSRPFVVDYAGPRQGIRGIMVMGSQISPDLLHDVLDGAIVGVVAVESPNAIMTGESEQPPSEPAMDEGNSQSDGDMSDVASDVAMEDGPASPSTKTAHTTPASPSFETMITRTSGEDLPYLFVGAGSCNPLDPKASNCLGLALVRSIDVPSRKLELVTPIPGLKIREALEQGHGIVLVRGMLDNPNWALSEDYYAARAAEKGHQQSVAKAKKDTGAGEDGDAAATSDQQPTVSAMLRDRIRRASNVPWMTVIEDNSRRHREAAQREKSLWKLRKKAYPGSESETDW</sequence>
<reference key="1">
    <citation type="journal article" date="2008" name="PLoS Genet.">
        <title>Genomic islands in the pathogenic filamentous fungus Aspergillus fumigatus.</title>
        <authorList>
            <person name="Fedorova N.D."/>
            <person name="Khaldi N."/>
            <person name="Joardar V.S."/>
            <person name="Maiti R."/>
            <person name="Amedeo P."/>
            <person name="Anderson M.J."/>
            <person name="Crabtree J."/>
            <person name="Silva J.C."/>
            <person name="Badger J.H."/>
            <person name="Albarraq A."/>
            <person name="Angiuoli S."/>
            <person name="Bussey H."/>
            <person name="Bowyer P."/>
            <person name="Cotty P.J."/>
            <person name="Dyer P.S."/>
            <person name="Egan A."/>
            <person name="Galens K."/>
            <person name="Fraser-Liggett C.M."/>
            <person name="Haas B.J."/>
            <person name="Inman J.M."/>
            <person name="Kent R."/>
            <person name="Lemieux S."/>
            <person name="Malavazi I."/>
            <person name="Orvis J."/>
            <person name="Roemer T."/>
            <person name="Ronning C.M."/>
            <person name="Sundaram J.P."/>
            <person name="Sutton G."/>
            <person name="Turner G."/>
            <person name="Venter J.C."/>
            <person name="White O.R."/>
            <person name="Whitty B.R."/>
            <person name="Youngman P."/>
            <person name="Wolfe K.H."/>
            <person name="Goldman G.H."/>
            <person name="Wortman J.R."/>
            <person name="Jiang B."/>
            <person name="Denning D.W."/>
            <person name="Nierman W.C."/>
        </authorList>
    </citation>
    <scope>NUCLEOTIDE SEQUENCE [LARGE SCALE GENOMIC DNA]</scope>
    <source>
        <strain>ATCC 1007 / CBS 513.65 / DSM 816 / NCTC 3887 / NRRL 1 / QM 1276 / 107</strain>
    </source>
</reference>
<gene>
    <name type="primary">grc3</name>
    <name type="ORF">ACLA_092620</name>
</gene>
<organism>
    <name type="scientific">Aspergillus clavatus (strain ATCC 1007 / CBS 513.65 / DSM 816 / NCTC 3887 / NRRL 1 / QM 1276 / 107)</name>
    <dbReference type="NCBI Taxonomy" id="344612"/>
    <lineage>
        <taxon>Eukaryota</taxon>
        <taxon>Fungi</taxon>
        <taxon>Dikarya</taxon>
        <taxon>Ascomycota</taxon>
        <taxon>Pezizomycotina</taxon>
        <taxon>Eurotiomycetes</taxon>
        <taxon>Eurotiomycetidae</taxon>
        <taxon>Eurotiales</taxon>
        <taxon>Aspergillaceae</taxon>
        <taxon>Aspergillus</taxon>
        <taxon>Aspergillus subgen. Fumigati</taxon>
    </lineage>
</organism>